<name>SSTT_SALNS</name>
<reference key="1">
    <citation type="journal article" date="2011" name="J. Bacteriol.">
        <title>Comparative genomics of 28 Salmonella enterica isolates: evidence for CRISPR-mediated adaptive sublineage evolution.</title>
        <authorList>
            <person name="Fricke W.F."/>
            <person name="Mammel M.K."/>
            <person name="McDermott P.F."/>
            <person name="Tartera C."/>
            <person name="White D.G."/>
            <person name="Leclerc J.E."/>
            <person name="Ravel J."/>
            <person name="Cebula T.A."/>
        </authorList>
    </citation>
    <scope>NUCLEOTIDE SEQUENCE [LARGE SCALE GENOMIC DNA]</scope>
    <source>
        <strain>SL254</strain>
    </source>
</reference>
<dbReference type="EMBL" id="CP001113">
    <property type="protein sequence ID" value="ACF64460.1"/>
    <property type="molecule type" value="Genomic_DNA"/>
</dbReference>
<dbReference type="RefSeq" id="WP_000235363.1">
    <property type="nucleotide sequence ID" value="NZ_CCMR01000001.1"/>
</dbReference>
<dbReference type="SMR" id="B4T695"/>
<dbReference type="KEGG" id="see:SNSL254_A3486"/>
<dbReference type="HOGENOM" id="CLU_044581_0_0_6"/>
<dbReference type="Proteomes" id="UP000008824">
    <property type="component" value="Chromosome"/>
</dbReference>
<dbReference type="GO" id="GO:0005886">
    <property type="term" value="C:plasma membrane"/>
    <property type="evidence" value="ECO:0007669"/>
    <property type="project" value="UniProtKB-SubCell"/>
</dbReference>
<dbReference type="GO" id="GO:0005295">
    <property type="term" value="F:neutral L-amino acid:sodium symporter activity"/>
    <property type="evidence" value="ECO:0007669"/>
    <property type="project" value="TreeGrafter"/>
</dbReference>
<dbReference type="GO" id="GO:0032329">
    <property type="term" value="P:serine transport"/>
    <property type="evidence" value="ECO:0007669"/>
    <property type="project" value="InterPro"/>
</dbReference>
<dbReference type="GO" id="GO:0015826">
    <property type="term" value="P:threonine transport"/>
    <property type="evidence" value="ECO:0007669"/>
    <property type="project" value="InterPro"/>
</dbReference>
<dbReference type="FunFam" id="1.10.3860.10:FF:000003">
    <property type="entry name" value="Serine/threonine transporter sstT"/>
    <property type="match status" value="1"/>
</dbReference>
<dbReference type="Gene3D" id="1.10.3860.10">
    <property type="entry name" value="Sodium:dicarboxylate symporter"/>
    <property type="match status" value="1"/>
</dbReference>
<dbReference type="HAMAP" id="MF_01582">
    <property type="entry name" value="Ser_Thr_transp_SstT"/>
    <property type="match status" value="1"/>
</dbReference>
<dbReference type="InterPro" id="IPR001991">
    <property type="entry name" value="Na-dicarboxylate_symporter"/>
</dbReference>
<dbReference type="InterPro" id="IPR036458">
    <property type="entry name" value="Na:dicarbo_symporter_sf"/>
</dbReference>
<dbReference type="InterPro" id="IPR023025">
    <property type="entry name" value="Ser_Thr_transp_SstT"/>
</dbReference>
<dbReference type="NCBIfam" id="NF010151">
    <property type="entry name" value="PRK13628.1"/>
    <property type="match status" value="1"/>
</dbReference>
<dbReference type="PANTHER" id="PTHR42865">
    <property type="entry name" value="PROTON/GLUTAMATE-ASPARTATE SYMPORTER"/>
    <property type="match status" value="1"/>
</dbReference>
<dbReference type="PANTHER" id="PTHR42865:SF8">
    <property type="entry name" value="SERINE_THREONINE TRANSPORTER SSTT"/>
    <property type="match status" value="1"/>
</dbReference>
<dbReference type="Pfam" id="PF00375">
    <property type="entry name" value="SDF"/>
    <property type="match status" value="1"/>
</dbReference>
<dbReference type="PRINTS" id="PR00173">
    <property type="entry name" value="EDTRNSPORT"/>
</dbReference>
<dbReference type="SUPFAM" id="SSF118215">
    <property type="entry name" value="Proton glutamate symport protein"/>
    <property type="match status" value="1"/>
</dbReference>
<dbReference type="PROSITE" id="PS00713">
    <property type="entry name" value="NA_DICARBOXYL_SYMP_1"/>
    <property type="match status" value="1"/>
</dbReference>
<feature type="chain" id="PRO_1000197562" description="Serine/threonine transporter SstT">
    <location>
        <begin position="1"/>
        <end position="414"/>
    </location>
</feature>
<feature type="transmembrane region" description="Helical" evidence="1">
    <location>
        <begin position="16"/>
        <end position="36"/>
    </location>
</feature>
<feature type="transmembrane region" description="Helical" evidence="1">
    <location>
        <begin position="46"/>
        <end position="66"/>
    </location>
</feature>
<feature type="transmembrane region" description="Helical" evidence="1">
    <location>
        <begin position="84"/>
        <end position="104"/>
    </location>
</feature>
<feature type="transmembrane region" description="Helical" evidence="1">
    <location>
        <begin position="143"/>
        <end position="163"/>
    </location>
</feature>
<feature type="transmembrane region" description="Helical" evidence="1">
    <location>
        <begin position="180"/>
        <end position="200"/>
    </location>
</feature>
<feature type="transmembrane region" description="Helical" evidence="1">
    <location>
        <begin position="219"/>
        <end position="239"/>
    </location>
</feature>
<feature type="transmembrane region" description="Helical" evidence="1">
    <location>
        <begin position="300"/>
        <end position="320"/>
    </location>
</feature>
<feature type="transmembrane region" description="Helical" evidence="1">
    <location>
        <begin position="332"/>
        <end position="352"/>
    </location>
</feature>
<proteinExistence type="inferred from homology"/>
<keyword id="KW-0029">Amino-acid transport</keyword>
<keyword id="KW-0997">Cell inner membrane</keyword>
<keyword id="KW-1003">Cell membrane</keyword>
<keyword id="KW-0472">Membrane</keyword>
<keyword id="KW-0769">Symport</keyword>
<keyword id="KW-0812">Transmembrane</keyword>
<keyword id="KW-1133">Transmembrane helix</keyword>
<keyword id="KW-0813">Transport</keyword>
<evidence type="ECO:0000255" key="1">
    <source>
        <dbReference type="HAMAP-Rule" id="MF_01582"/>
    </source>
</evidence>
<organism>
    <name type="scientific">Salmonella newport (strain SL254)</name>
    <dbReference type="NCBI Taxonomy" id="423368"/>
    <lineage>
        <taxon>Bacteria</taxon>
        <taxon>Pseudomonadati</taxon>
        <taxon>Pseudomonadota</taxon>
        <taxon>Gammaproteobacteria</taxon>
        <taxon>Enterobacterales</taxon>
        <taxon>Enterobacteriaceae</taxon>
        <taxon>Salmonella</taxon>
    </lineage>
</organism>
<comment type="function">
    <text evidence="1">Involved in the import of serine and threonine into the cell, with the concomitant import of sodium (symport system).</text>
</comment>
<comment type="catalytic activity">
    <reaction evidence="1">
        <text>L-serine(in) + Na(+)(in) = L-serine(out) + Na(+)(out)</text>
        <dbReference type="Rhea" id="RHEA:29575"/>
        <dbReference type="ChEBI" id="CHEBI:29101"/>
        <dbReference type="ChEBI" id="CHEBI:33384"/>
    </reaction>
    <physiologicalReaction direction="right-to-left" evidence="1">
        <dbReference type="Rhea" id="RHEA:29577"/>
    </physiologicalReaction>
</comment>
<comment type="catalytic activity">
    <reaction evidence="1">
        <text>L-threonine(in) + Na(+)(in) = L-threonine(out) + Na(+)(out)</text>
        <dbReference type="Rhea" id="RHEA:69999"/>
        <dbReference type="ChEBI" id="CHEBI:29101"/>
        <dbReference type="ChEBI" id="CHEBI:57926"/>
    </reaction>
    <physiologicalReaction direction="right-to-left" evidence="1">
        <dbReference type="Rhea" id="RHEA:70001"/>
    </physiologicalReaction>
</comment>
<comment type="subcellular location">
    <subcellularLocation>
        <location evidence="1">Cell inner membrane</location>
        <topology evidence="1">Multi-pass membrane protein</topology>
    </subcellularLocation>
</comment>
<comment type="similarity">
    <text evidence="1">Belongs to the dicarboxylate/amino acid:cation symporter (DAACS) (TC 2.A.23) family.</text>
</comment>
<accession>B4T695</accession>
<protein>
    <recommendedName>
        <fullName evidence="1">Serine/threonine transporter SstT</fullName>
    </recommendedName>
    <alternativeName>
        <fullName evidence="1">Na(+)/serine-threonine symporter</fullName>
    </alternativeName>
</protein>
<gene>
    <name evidence="1" type="primary">sstT</name>
    <name type="ordered locus">SNSL254_A3486</name>
</gene>
<sequence length="414" mass="43413">MATQRASGLLQRLAQGSLVKQILVGLVLGILLAWISKPAAEAVGLLGTLFVGALKAVAPVLVLMLVMASIANHQHGQKTNIRPILFLYLLGTFSAALAAVVFSFAFPSTLHLSSSAQDIVPPSGIVEVLRGLLMSMVSNPIDALLNANYIGILVWAVGLGFALRHGNETTKNLVNDMSNAVTFMVKLVIRFAPVGIFGLVSSTLATTGFSTLWGYAHLLVVLIGCMLLVALVVNPLLVFWKIRRNPYPLVFACLRESGVYAFFTRSSAANIPVNMALCEKLNLDRDTYSVSIPLGATINMAGAAITITVLTLAAVHTLGVPVDLPTALLLSVVASLCACGASGVAGGSLLLIPLACNMFGIPNDIAMQVVAVGFIIGVLQDSCETALNSSTDVLFTAAACQAEDERLANNALRS</sequence>